<evidence type="ECO:0000305" key="1"/>
<sequence>MTKFNFDQVHSDIQFKIKHLMVSQVKGTFKQFDVQLDGDINDLTSLKATATIIPSSIDTQNEDRDNHLRSNDFFGTEDNDKMTFVTKEINENQVVGDLTIKGETHEETFDVEFNGVSKNPMNGQQVTGFIVSGTINREKYGINFNQALETGGVMLGKNVKFEASAEFSIDN</sequence>
<reference key="1">
    <citation type="journal article" date="2003" name="Mol. Microbiol.">
        <title>Genome-based analysis of virulence genes in a non-biofilm-forming Staphylococcus epidermidis strain (ATCC 12228).</title>
        <authorList>
            <person name="Zhang Y.-Q."/>
            <person name="Ren S.-X."/>
            <person name="Li H.-L."/>
            <person name="Wang Y.-X."/>
            <person name="Fu G."/>
            <person name="Yang J."/>
            <person name="Qin Z.-Q."/>
            <person name="Miao Y.-G."/>
            <person name="Wang W.-Y."/>
            <person name="Chen R.-S."/>
            <person name="Shen Y."/>
            <person name="Chen Z."/>
            <person name="Yuan Z.-H."/>
            <person name="Zhao G.-P."/>
            <person name="Qu D."/>
            <person name="Danchin A."/>
            <person name="Wen Y.-M."/>
        </authorList>
    </citation>
    <scope>NUCLEOTIDE SEQUENCE [LARGE SCALE GENOMIC DNA]</scope>
    <source>
        <strain>ATCC 12228 / FDA PCI 1200</strain>
    </source>
</reference>
<gene>
    <name type="ordered locus">SE_0264</name>
</gene>
<proteinExistence type="inferred from homology"/>
<organism>
    <name type="scientific">Staphylococcus epidermidis (strain ATCC 12228 / FDA PCI 1200)</name>
    <dbReference type="NCBI Taxonomy" id="176280"/>
    <lineage>
        <taxon>Bacteria</taxon>
        <taxon>Bacillati</taxon>
        <taxon>Bacillota</taxon>
        <taxon>Bacilli</taxon>
        <taxon>Bacillales</taxon>
        <taxon>Staphylococcaceae</taxon>
        <taxon>Staphylococcus</taxon>
    </lineage>
</organism>
<feature type="chain" id="PRO_0000299516" description="UPF0312 protein SE_0264">
    <location>
        <begin position="1"/>
        <end position="171"/>
    </location>
</feature>
<accession>Q8CTV7</accession>
<protein>
    <recommendedName>
        <fullName>UPF0312 protein SE_0264</fullName>
    </recommendedName>
</protein>
<name>Y264_STAES</name>
<comment type="similarity">
    <text evidence="1">Belongs to the UPF0312 family.</text>
</comment>
<dbReference type="EMBL" id="AE015929">
    <property type="protein sequence ID" value="AAO03861.1"/>
    <property type="molecule type" value="Genomic_DNA"/>
</dbReference>
<dbReference type="RefSeq" id="NP_763819.1">
    <property type="nucleotide sequence ID" value="NC_004461.1"/>
</dbReference>
<dbReference type="RefSeq" id="WP_001829423.1">
    <property type="nucleotide sequence ID" value="NZ_WBME01000037.1"/>
</dbReference>
<dbReference type="SMR" id="Q8CTV7"/>
<dbReference type="KEGG" id="sep:SE_0264"/>
<dbReference type="PATRIC" id="fig|176280.10.peg.242"/>
<dbReference type="eggNOG" id="COG2353">
    <property type="taxonomic scope" value="Bacteria"/>
</dbReference>
<dbReference type="HOGENOM" id="CLU_071003_3_0_9"/>
<dbReference type="OrthoDB" id="9811006at2"/>
<dbReference type="Proteomes" id="UP000001411">
    <property type="component" value="Chromosome"/>
</dbReference>
<dbReference type="Gene3D" id="2.40.128.110">
    <property type="entry name" value="Lipid/polyisoprenoid-binding, YceI-like"/>
    <property type="match status" value="1"/>
</dbReference>
<dbReference type="InterPro" id="IPR007372">
    <property type="entry name" value="Lipid/polyisoprenoid-bd_YceI"/>
</dbReference>
<dbReference type="InterPro" id="IPR036761">
    <property type="entry name" value="TTHA0802/YceI-like_sf"/>
</dbReference>
<dbReference type="PANTHER" id="PTHR34406">
    <property type="entry name" value="PROTEIN YCEI"/>
    <property type="match status" value="1"/>
</dbReference>
<dbReference type="PANTHER" id="PTHR34406:SF1">
    <property type="entry name" value="PROTEIN YCEI"/>
    <property type="match status" value="1"/>
</dbReference>
<dbReference type="Pfam" id="PF04264">
    <property type="entry name" value="YceI"/>
    <property type="match status" value="1"/>
</dbReference>
<dbReference type="SMART" id="SM00867">
    <property type="entry name" value="YceI"/>
    <property type="match status" value="1"/>
</dbReference>
<dbReference type="SUPFAM" id="SSF101874">
    <property type="entry name" value="YceI-like"/>
    <property type="match status" value="1"/>
</dbReference>